<comment type="function">
    <text evidence="4 5 6 8 9 10">Olfactory receptor specific for 2-phenylethylamine, a trace amine present at high concentration in the urine of carnivore species, playing a key role in fear and avoidance responses (PubMed:16878137, PubMed:21690383, PubMed:22545963, PubMed:23624375, PubMed:30038239, PubMed:37225986). 2-phenylethylamine acts as a kairomone in the chemical detection of carnivore odor and triggers fear in mice (PubMed:16878137, PubMed:21690383, PubMed:23624375). This receptor is probably mediated by the G(s)-class of G-proteins which activate adenylate cyclase (PubMed:16878137, PubMed:21690383, PubMed:23624375).</text>
</comment>
<comment type="subcellular location">
    <subcellularLocation>
        <location evidence="13">Cell membrane</location>
        <topology evidence="2">Multi-pass membrane protein</topology>
    </subcellularLocation>
</comment>
<comment type="tissue specificity">
    <text evidence="4 7">Specifically expressed in neurons of the olfactory epithelium, to discrete glomeruli predominantly localized to a confined bulb region (PubMed:16878137, PubMed:22837392). Present in the dorsal area of the main olfactory epithelium (PubMed:16878137, PubMed:22837392).</text>
</comment>
<comment type="disruption phenotype">
    <text evidence="8 9">Mice lacking Taar4 show an absence of aversion to low concentrations of volatile amines and to the odor of predator urine (PubMed:23624375). They display decreased sensitivity to 2-phenylethylamine (PubMed:30038239).</text>
</comment>
<comment type="similarity">
    <text evidence="3">Belongs to the G-protein coupled receptor 1 family.</text>
</comment>
<proteinExistence type="evidence at protein level"/>
<sequence length="347" mass="38904">MNTPDPWSSPEVQFCFAAANSSCPRKARPALVVCAMYLIMIGAIVMTMLGNMAVIISIAHFKQLHSPTNFLILSMATTDFLLSCVVMPFSMIRSIESCWYFGDLFCKVHSCCDIMLCTTSIFHLCFISVDRHYAVCDPLHYVTQITTRVVGVFLLISWSVPIFFAFGLVFSELNLIGAEDFVAAIDCTGLCVLIFNKLWGVLASFIAFFLPGTVMVGIYIHIFTVAQKHARQIGTGPRTKQALSESKMKATSKKESKATKTLSIVMGVFVLCWLPFFVLTITDPFIDFTTPEDLYNVFLWLGYFNSTFNPIIYGMFYPWFRKALRMIVTGTIFRSDSSTSSLHPAHP</sequence>
<name>TAAR4_MOUSE</name>
<evidence type="ECO:0000250" key="1">
    <source>
        <dbReference type="UniProtKB" id="Q5QD04"/>
    </source>
</evidence>
<evidence type="ECO:0000255" key="2"/>
<evidence type="ECO:0000255" key="3">
    <source>
        <dbReference type="PROSITE-ProRule" id="PRU00521"/>
    </source>
</evidence>
<evidence type="ECO:0000269" key="4">
    <source>
    </source>
</evidence>
<evidence type="ECO:0000269" key="5">
    <source>
    </source>
</evidence>
<evidence type="ECO:0000269" key="6">
    <source>
    </source>
</evidence>
<evidence type="ECO:0000269" key="7">
    <source>
    </source>
</evidence>
<evidence type="ECO:0000269" key="8">
    <source>
    </source>
</evidence>
<evidence type="ECO:0000269" key="9">
    <source>
    </source>
</evidence>
<evidence type="ECO:0000269" key="10">
    <source>
    </source>
</evidence>
<evidence type="ECO:0000303" key="11">
    <source>
    </source>
</evidence>
<evidence type="ECO:0000303" key="12">
    <source>
    </source>
</evidence>
<evidence type="ECO:0000305" key="13"/>
<evidence type="ECO:0000305" key="14">
    <source>
    </source>
</evidence>
<evidence type="ECO:0000312" key="15">
    <source>
        <dbReference type="MGI" id="MGI:2685072"/>
    </source>
</evidence>
<dbReference type="EMBL" id="AY702328">
    <property type="protein sequence ID" value="AAV70138.1"/>
    <property type="molecule type" value="Genomic_DNA"/>
</dbReference>
<dbReference type="CCDS" id="CCDS23737.1"/>
<dbReference type="RefSeq" id="NP_001008499.1">
    <property type="nucleotide sequence ID" value="NM_001008499.1"/>
</dbReference>
<dbReference type="SMR" id="Q5QD15"/>
<dbReference type="FunCoup" id="Q5QD15">
    <property type="interactions" value="408"/>
</dbReference>
<dbReference type="STRING" id="10090.ENSMUSP00000090330"/>
<dbReference type="GuidetoPHARMACOLOGY" id="169"/>
<dbReference type="GlyCosmos" id="Q5QD15">
    <property type="glycosylation" value="1 site, No reported glycans"/>
</dbReference>
<dbReference type="GlyGen" id="Q5QD15">
    <property type="glycosylation" value="1 site"/>
</dbReference>
<dbReference type="PaxDb" id="10090-ENSMUSP00000090330"/>
<dbReference type="DNASU" id="209513"/>
<dbReference type="Ensembl" id="ENSMUST00000092660.2">
    <property type="protein sequence ID" value="ENSMUSP00000090330.2"/>
    <property type="gene ID" value="ENSMUSG00000069707.2"/>
</dbReference>
<dbReference type="GeneID" id="209513"/>
<dbReference type="KEGG" id="mmu:209513"/>
<dbReference type="UCSC" id="uc007eqg.1">
    <property type="organism name" value="mouse"/>
</dbReference>
<dbReference type="AGR" id="MGI:2685072"/>
<dbReference type="CTD" id="209513"/>
<dbReference type="MGI" id="MGI:2685072">
    <property type="gene designation" value="Taar4"/>
</dbReference>
<dbReference type="VEuPathDB" id="HostDB:ENSMUSG00000069707"/>
<dbReference type="eggNOG" id="KOG3656">
    <property type="taxonomic scope" value="Eukaryota"/>
</dbReference>
<dbReference type="GeneTree" id="ENSGT00940000162730"/>
<dbReference type="HOGENOM" id="CLU_009579_11_0_1"/>
<dbReference type="InParanoid" id="Q5QD15"/>
<dbReference type="OMA" id="LWNPPEV"/>
<dbReference type="OrthoDB" id="10042731at2759"/>
<dbReference type="PhylomeDB" id="Q5QD15"/>
<dbReference type="TreeFam" id="TF343107"/>
<dbReference type="BioGRID-ORCS" id="209513">
    <property type="hits" value="3 hits in 77 CRISPR screens"/>
</dbReference>
<dbReference type="PRO" id="PR:Q5QD15"/>
<dbReference type="Proteomes" id="UP000000589">
    <property type="component" value="Chromosome 10"/>
</dbReference>
<dbReference type="RNAct" id="Q5QD15">
    <property type="molecule type" value="protein"/>
</dbReference>
<dbReference type="Bgee" id="ENSMUSG00000069707">
    <property type="expression patterns" value="Expressed in nose and 3 other cell types or tissues"/>
</dbReference>
<dbReference type="GO" id="GO:0005886">
    <property type="term" value="C:plasma membrane"/>
    <property type="evidence" value="ECO:0007669"/>
    <property type="project" value="UniProtKB-SubCell"/>
</dbReference>
<dbReference type="GO" id="GO:1990080">
    <property type="term" value="F:2-phenylethylamine receptor activity"/>
    <property type="evidence" value="ECO:0000314"/>
    <property type="project" value="UniProtKB"/>
</dbReference>
<dbReference type="GO" id="GO:0008227">
    <property type="term" value="F:G protein-coupled amine receptor activity"/>
    <property type="evidence" value="ECO:0000266"/>
    <property type="project" value="MGI"/>
</dbReference>
<dbReference type="GO" id="GO:0001594">
    <property type="term" value="F:trace-amine receptor activity"/>
    <property type="evidence" value="ECO:0000314"/>
    <property type="project" value="UniProtKB"/>
</dbReference>
<dbReference type="GO" id="GO:0001662">
    <property type="term" value="P:behavioral fear response"/>
    <property type="evidence" value="ECO:0000315"/>
    <property type="project" value="UniProtKB"/>
</dbReference>
<dbReference type="GO" id="GO:0007635">
    <property type="term" value="P:chemosensory behavior"/>
    <property type="evidence" value="ECO:0000315"/>
    <property type="project" value="UniProtKB"/>
</dbReference>
<dbReference type="GO" id="GO:0007606">
    <property type="term" value="P:sensory perception of chemical stimulus"/>
    <property type="evidence" value="ECO:0000314"/>
    <property type="project" value="UniProtKB"/>
</dbReference>
<dbReference type="CDD" id="cd15312">
    <property type="entry name" value="7tmA_TAAR2_3_4"/>
    <property type="match status" value="1"/>
</dbReference>
<dbReference type="FunFam" id="1.20.1070.10:FF:000030">
    <property type="entry name" value="trace amine-associated receptor 1"/>
    <property type="match status" value="1"/>
</dbReference>
<dbReference type="Gene3D" id="1.20.1070.10">
    <property type="entry name" value="Rhodopsin 7-helix transmembrane proteins"/>
    <property type="match status" value="1"/>
</dbReference>
<dbReference type="InterPro" id="IPR000276">
    <property type="entry name" value="GPCR_Rhodpsn"/>
</dbReference>
<dbReference type="InterPro" id="IPR017452">
    <property type="entry name" value="GPCR_Rhodpsn_7TM"/>
</dbReference>
<dbReference type="InterPro" id="IPR050569">
    <property type="entry name" value="TAAR"/>
</dbReference>
<dbReference type="InterPro" id="IPR009132">
    <property type="entry name" value="TAAR_fam"/>
</dbReference>
<dbReference type="PANTHER" id="PTHR24249">
    <property type="entry name" value="HISTAMINE RECEPTOR-RELATED G-PROTEIN COUPLED RECEPTOR"/>
    <property type="match status" value="1"/>
</dbReference>
<dbReference type="PANTHER" id="PTHR24249:SF220">
    <property type="entry name" value="TRACE AMINE-ASSOCIATED RECEPTOR 4"/>
    <property type="match status" value="1"/>
</dbReference>
<dbReference type="Pfam" id="PF00001">
    <property type="entry name" value="7tm_1"/>
    <property type="match status" value="1"/>
</dbReference>
<dbReference type="PRINTS" id="PR00237">
    <property type="entry name" value="GPCRRHODOPSN"/>
</dbReference>
<dbReference type="PRINTS" id="PR01830">
    <property type="entry name" value="TRACEAMINER"/>
</dbReference>
<dbReference type="SMART" id="SM01381">
    <property type="entry name" value="7TM_GPCR_Srsx"/>
    <property type="match status" value="1"/>
</dbReference>
<dbReference type="SUPFAM" id="SSF81321">
    <property type="entry name" value="Family A G protein-coupled receptor-like"/>
    <property type="match status" value="1"/>
</dbReference>
<dbReference type="PROSITE" id="PS00237">
    <property type="entry name" value="G_PROTEIN_RECEP_F1_1"/>
    <property type="match status" value="1"/>
</dbReference>
<dbReference type="PROSITE" id="PS50262">
    <property type="entry name" value="G_PROTEIN_RECEP_F1_2"/>
    <property type="match status" value="1"/>
</dbReference>
<protein>
    <recommendedName>
        <fullName evidence="11">Trace amine-associated receptor 4</fullName>
        <shortName evidence="11">TaR-4</shortName>
        <shortName evidence="11">Trace amine receptor 4</shortName>
        <shortName evidence="12">mTaar4</shortName>
    </recommendedName>
    <alternativeName>
        <fullName>2-phenylethylamine receptor</fullName>
    </alternativeName>
</protein>
<reference key="1">
    <citation type="journal article" date="2005" name="Genomics">
        <title>Trace amine-associated receptors form structurally and functionally distinct subfamilies of novel G protein-coupled receptors.</title>
        <authorList>
            <person name="Lindemann L."/>
            <person name="Ebeling M."/>
            <person name="Kratochwil N.A."/>
            <person name="Bunzow J.R."/>
            <person name="Grandy D.K."/>
            <person name="Hoener M.C."/>
        </authorList>
    </citation>
    <scope>NUCLEOTIDE SEQUENCE [GENOMIC DNA]</scope>
    <source>
        <strain>C57BL/6J</strain>
    </source>
</reference>
<reference key="2">
    <citation type="journal article" date="2006" name="Nature">
        <title>A second class of chemosensory receptors in the olfactory epithelium.</title>
        <authorList>
            <person name="Liberles S.D."/>
            <person name="Buck L.B."/>
        </authorList>
    </citation>
    <scope>FUNCTION</scope>
    <scope>TISSUE SPECIFICITY</scope>
</reference>
<reference key="3">
    <citation type="journal article" date="2011" name="Proc. Natl. Acad. Sci. U.S.A.">
        <title>Detection and avoidance of a carnivore odor by prey.</title>
        <authorList>
            <person name="Ferrero D.M."/>
            <person name="Lemon J.K."/>
            <person name="Fluegge D."/>
            <person name="Pashkovski S.L."/>
            <person name="Korzan W.J."/>
            <person name="Datta S.R."/>
            <person name="Spehr M."/>
            <person name="Fendt M."/>
            <person name="Liberles S.D."/>
        </authorList>
    </citation>
    <scope>FUNCTION</scope>
</reference>
<reference key="4">
    <citation type="journal article" date="2012" name="ACS Chem. Biol.">
        <title>Agonists for 13 trace amine-associated receptors provide insight into the molecular basis of odor selectivity.</title>
        <authorList>
            <person name="Ferrero D.M."/>
            <person name="Wacker D."/>
            <person name="Roque M.A."/>
            <person name="Baldwin M.W."/>
            <person name="Stevens R.C."/>
            <person name="Liberles S.D."/>
        </authorList>
    </citation>
    <scope>FUNCTION</scope>
</reference>
<reference key="5">
    <citation type="journal article" date="2012" name="Proc. Natl. Acad. Sci. U.S.A.">
        <title>Neurons expressing trace amine-associated receptors project to discrete glomeruli and constitute an olfactory subsystem.</title>
        <authorList>
            <person name="Johnson M.A."/>
            <person name="Tsai L."/>
            <person name="Roy D.S."/>
            <person name="Valenzuela D.H."/>
            <person name="Mosley C."/>
            <person name="Magklara A."/>
            <person name="Lomvardas S."/>
            <person name="Liberles S.D."/>
            <person name="Barnea G."/>
        </authorList>
    </citation>
    <scope>TISSUE SPECIFICITY</scope>
</reference>
<reference key="6">
    <citation type="journal article" date="2013" name="Nature">
        <title>Non-redundant coding of aversive odours in the main olfactory pathway.</title>
        <authorList>
            <person name="Dewan A."/>
            <person name="Pacifico R."/>
            <person name="Zhan R."/>
            <person name="Rinberg D."/>
            <person name="Bozza T."/>
        </authorList>
    </citation>
    <scope>FUNCTION</scope>
    <scope>DISRUPTION PHENOTYPE</scope>
</reference>
<reference key="7">
    <citation type="journal article" date="2018" name="Nat. Commun.">
        <title>Single olfactory receptors set odor detection thresholds.</title>
        <authorList>
            <person name="Dewan A."/>
            <person name="Cichy A."/>
            <person name="Zhang J."/>
            <person name="Miguel K."/>
            <person name="Feinstein P."/>
            <person name="Rinberg D."/>
            <person name="Bozza T."/>
        </authorList>
    </citation>
    <scope>FUNCTION</scope>
    <scope>DISRUPTION PHENOTYPE</scope>
</reference>
<reference key="8">
    <citation type="journal article" date="2023" name="Nature">
        <title>Structural basis of amine odorant perception by a mammal olfactory receptor.</title>
        <authorList>
            <person name="Guo L."/>
            <person name="Cheng J."/>
            <person name="Lian S."/>
            <person name="Liu Q."/>
            <person name="Lu Y."/>
            <person name="Zheng Y."/>
            <person name="Zhu K."/>
            <person name="Zhang M."/>
            <person name="Kong Y."/>
            <person name="Zhang C."/>
            <person name="Rong N."/>
            <person name="Zhuang Y."/>
            <person name="Fang G."/>
            <person name="Jiang J."/>
            <person name="Zhang T."/>
            <person name="Han X."/>
            <person name="Liu Z."/>
            <person name="Xia M."/>
            <person name="Liu S."/>
            <person name="Zhang L."/>
            <person name="Liberles S.D."/>
            <person name="Yu X."/>
            <person name="Xu Y."/>
            <person name="Yang F."/>
            <person name="Li Q."/>
            <person name="Sun J.P."/>
        </authorList>
    </citation>
    <scope>FUNCTION</scope>
    <scope>DISULFIDE BOND</scope>
    <scope>MUTAGENESIS OF CYS-23; ASP-113; CYS-117; CYS-187; TRP-273 AND TYR-303</scope>
</reference>
<gene>
    <name evidence="11 15" type="primary">Taar4</name>
    <name type="synonym">Gm226</name>
</gene>
<keyword id="KW-0085">Behavior</keyword>
<keyword id="KW-1003">Cell membrane</keyword>
<keyword id="KW-1015">Disulfide bond</keyword>
<keyword id="KW-0297">G-protein coupled receptor</keyword>
<keyword id="KW-0325">Glycoprotein</keyword>
<keyword id="KW-0472">Membrane</keyword>
<keyword id="KW-0675">Receptor</keyword>
<keyword id="KW-1185">Reference proteome</keyword>
<keyword id="KW-0807">Transducer</keyword>
<keyword id="KW-0812">Transmembrane</keyword>
<keyword id="KW-1133">Transmembrane helix</keyword>
<organism>
    <name type="scientific">Mus musculus</name>
    <name type="common">Mouse</name>
    <dbReference type="NCBI Taxonomy" id="10090"/>
    <lineage>
        <taxon>Eukaryota</taxon>
        <taxon>Metazoa</taxon>
        <taxon>Chordata</taxon>
        <taxon>Craniata</taxon>
        <taxon>Vertebrata</taxon>
        <taxon>Euteleostomi</taxon>
        <taxon>Mammalia</taxon>
        <taxon>Eutheria</taxon>
        <taxon>Euarchontoglires</taxon>
        <taxon>Glires</taxon>
        <taxon>Rodentia</taxon>
        <taxon>Myomorpha</taxon>
        <taxon>Muroidea</taxon>
        <taxon>Muridae</taxon>
        <taxon>Murinae</taxon>
        <taxon>Mus</taxon>
        <taxon>Mus</taxon>
    </lineage>
</organism>
<feature type="chain" id="PRO_0000070152" description="Trace amine-associated receptor 4">
    <location>
        <begin position="1"/>
        <end position="347"/>
    </location>
</feature>
<feature type="topological domain" description="Extracellular" evidence="2">
    <location>
        <begin position="1"/>
        <end position="37"/>
    </location>
</feature>
<feature type="transmembrane region" description="Helical; Name=1" evidence="2">
    <location>
        <begin position="38"/>
        <end position="58"/>
    </location>
</feature>
<feature type="topological domain" description="Cytoplasmic" evidence="2">
    <location>
        <begin position="59"/>
        <end position="69"/>
    </location>
</feature>
<feature type="transmembrane region" description="Helical; Name=2" evidence="2">
    <location>
        <begin position="70"/>
        <end position="90"/>
    </location>
</feature>
<feature type="topological domain" description="Extracellular" evidence="2">
    <location>
        <begin position="91"/>
        <end position="110"/>
    </location>
</feature>
<feature type="transmembrane region" description="Helical; Name=3" evidence="2">
    <location>
        <begin position="111"/>
        <end position="129"/>
    </location>
</feature>
<feature type="topological domain" description="Cytoplasmic" evidence="2">
    <location>
        <begin position="130"/>
        <end position="149"/>
    </location>
</feature>
<feature type="transmembrane region" description="Helical; Name=4" evidence="2">
    <location>
        <begin position="150"/>
        <end position="170"/>
    </location>
</feature>
<feature type="topological domain" description="Extracellular" evidence="2">
    <location>
        <begin position="171"/>
        <end position="197"/>
    </location>
</feature>
<feature type="transmembrane region" description="Helical; Name=5" evidence="2">
    <location>
        <begin position="198"/>
        <end position="218"/>
    </location>
</feature>
<feature type="topological domain" description="Cytoplasmic" evidence="2">
    <location>
        <begin position="219"/>
        <end position="260"/>
    </location>
</feature>
<feature type="transmembrane region" description="Helical; Name=6" evidence="2">
    <location>
        <begin position="261"/>
        <end position="281"/>
    </location>
</feature>
<feature type="topological domain" description="Extracellular" evidence="2">
    <location>
        <begin position="282"/>
        <end position="296"/>
    </location>
</feature>
<feature type="transmembrane region" description="Helical; Name=7" evidence="2">
    <location>
        <begin position="297"/>
        <end position="317"/>
    </location>
</feature>
<feature type="topological domain" description="Cytoplasmic" evidence="2">
    <location>
        <begin position="318"/>
        <end position="347"/>
    </location>
</feature>
<feature type="region of interest" description="Extracellular Loop 2 (ECL2)" evidence="1">
    <location>
        <begin position="175"/>
        <end position="188"/>
    </location>
</feature>
<feature type="glycosylation site" description="N-linked (GlcNAc...) asparagine" evidence="2">
    <location>
        <position position="20"/>
    </location>
</feature>
<feature type="disulfide bond" evidence="14">
    <location>
        <begin position="23"/>
        <end position="187"/>
    </location>
</feature>
<feature type="disulfide bond" evidence="3">
    <location>
        <begin position="106"/>
        <end position="191"/>
    </location>
</feature>
<feature type="mutagenesis site" description="Decreased trace-amine receptor activity." evidence="10">
    <original>C</original>
    <variation>S</variation>
    <location>
        <position position="23"/>
    </location>
</feature>
<feature type="mutagenesis site" description="Abolished trace-amine receptor activity." evidence="10">
    <original>D</original>
    <variation>A</variation>
    <location>
        <position position="113"/>
    </location>
</feature>
<feature type="mutagenesis site" description="Does not affect trace-amine receptor activity." evidence="10">
    <original>C</original>
    <variation>A</variation>
    <location>
        <position position="117"/>
    </location>
</feature>
<feature type="mutagenesis site" description="Decreased trace-amine receptor activity." evidence="10">
    <original>C</original>
    <variation>S</variation>
    <location>
        <position position="187"/>
    </location>
</feature>
<feature type="mutagenesis site" description="Abolished trace-amine receptor activity." evidence="10">
    <original>W</original>
    <variation>A</variation>
    <location>
        <position position="273"/>
    </location>
</feature>
<feature type="mutagenesis site" description="Abolished trace-amine receptor activity." evidence="10">
    <original>Y</original>
    <variation>A</variation>
    <location>
        <position position="303"/>
    </location>
</feature>
<accession>Q5QD15</accession>